<gene>
    <name type="primary">ACMSD</name>
</gene>
<evidence type="ECO:0000269" key="1">
    <source>
    </source>
</evidence>
<evidence type="ECO:0000269" key="2">
    <source>
    </source>
</evidence>
<evidence type="ECO:0000303" key="3">
    <source>
    </source>
</evidence>
<evidence type="ECO:0000303" key="4">
    <source>
    </source>
</evidence>
<evidence type="ECO:0000305" key="5"/>
<evidence type="ECO:0000305" key="6">
    <source>
    </source>
</evidence>
<evidence type="ECO:0000305" key="7">
    <source>
    </source>
</evidence>
<evidence type="ECO:0000312" key="8">
    <source>
        <dbReference type="EMBL" id="AAH16018.1"/>
    </source>
</evidence>
<evidence type="ECO:0000312" key="9">
    <source>
        <dbReference type="EMBL" id="BAB86938.1"/>
    </source>
</evidence>
<evidence type="ECO:0007829" key="10">
    <source>
        <dbReference type="PDB" id="4OFC"/>
    </source>
</evidence>
<dbReference type="EC" id="4.1.1.45" evidence="1"/>
<dbReference type="EMBL" id="AB071418">
    <property type="protein sequence ID" value="BAB86938.1"/>
    <property type="molecule type" value="mRNA"/>
</dbReference>
<dbReference type="EMBL" id="AC016725">
    <property type="protein sequence ID" value="AAY14997.1"/>
    <property type="molecule type" value="Genomic_DNA"/>
</dbReference>
<dbReference type="EMBL" id="CH471058">
    <property type="protein sequence ID" value="EAX11650.1"/>
    <property type="molecule type" value="Genomic_DNA"/>
</dbReference>
<dbReference type="EMBL" id="CH471058">
    <property type="protein sequence ID" value="EAX11651.1"/>
    <property type="molecule type" value="Genomic_DNA"/>
</dbReference>
<dbReference type="EMBL" id="CH471058">
    <property type="protein sequence ID" value="EAX11652.1"/>
    <property type="molecule type" value="Genomic_DNA"/>
</dbReference>
<dbReference type="EMBL" id="BC016018">
    <property type="protein sequence ID" value="AAH16018.1"/>
    <property type="molecule type" value="mRNA"/>
</dbReference>
<dbReference type="EMBL" id="BC107420">
    <property type="protein sequence ID" value="AAI07421.1"/>
    <property type="molecule type" value="mRNA"/>
</dbReference>
<dbReference type="CCDS" id="CCDS2173.2">
    <molecule id="Q8TDX5-1"/>
</dbReference>
<dbReference type="CCDS" id="CCDS77464.1">
    <molecule id="Q8TDX5-2"/>
</dbReference>
<dbReference type="RefSeq" id="NP_001294912.1">
    <molecule id="Q8TDX5-2"/>
    <property type="nucleotide sequence ID" value="NM_001307983.2"/>
</dbReference>
<dbReference type="RefSeq" id="NP_612199.2">
    <molecule id="Q8TDX5-1"/>
    <property type="nucleotide sequence ID" value="NM_138326.3"/>
</dbReference>
<dbReference type="RefSeq" id="XP_005263645.1">
    <molecule id="Q8TDX5-2"/>
    <property type="nucleotide sequence ID" value="XM_005263588.5"/>
</dbReference>
<dbReference type="RefSeq" id="XP_011508894.1">
    <molecule id="Q8TDX5-2"/>
    <property type="nucleotide sequence ID" value="XM_011510592.3"/>
</dbReference>
<dbReference type="RefSeq" id="XP_016858814.1">
    <molecule id="Q8TDX5-2"/>
    <property type="nucleotide sequence ID" value="XM_017003325.2"/>
</dbReference>
<dbReference type="RefSeq" id="XP_016858815.1">
    <molecule id="Q8TDX5-2"/>
    <property type="nucleotide sequence ID" value="XM_017003326.2"/>
</dbReference>
<dbReference type="RefSeq" id="XP_054196474.1">
    <molecule id="Q8TDX5-2"/>
    <property type="nucleotide sequence ID" value="XM_054340499.1"/>
</dbReference>
<dbReference type="RefSeq" id="XP_054196475.1">
    <molecule id="Q8TDX5-2"/>
    <property type="nucleotide sequence ID" value="XM_054340500.1"/>
</dbReference>
<dbReference type="RefSeq" id="XP_054196476.1">
    <molecule id="Q8TDX5-2"/>
    <property type="nucleotide sequence ID" value="XM_054340501.1"/>
</dbReference>
<dbReference type="PDB" id="2WM1">
    <property type="method" value="X-ray"/>
    <property type="resolution" value="2.01 A"/>
    <property type="chains" value="A=1-336"/>
</dbReference>
<dbReference type="PDB" id="4IGM">
    <property type="method" value="X-ray"/>
    <property type="resolution" value="2.39 A"/>
    <property type="chains" value="A/B/C/D/E/F=1-332"/>
</dbReference>
<dbReference type="PDB" id="4IGN">
    <property type="method" value="X-ray"/>
    <property type="resolution" value="2.33 A"/>
    <property type="chains" value="A/B/C/D/E/F=1-332"/>
</dbReference>
<dbReference type="PDB" id="4IH3">
    <property type="method" value="X-ray"/>
    <property type="resolution" value="2.49 A"/>
    <property type="chains" value="A/B/C/D/E/F=1-332"/>
</dbReference>
<dbReference type="PDB" id="4OFC">
    <property type="method" value="X-ray"/>
    <property type="resolution" value="1.99 A"/>
    <property type="chains" value="A/B/C/D/E/F=1-335"/>
</dbReference>
<dbReference type="PDB" id="7PWY">
    <property type="method" value="X-ray"/>
    <property type="resolution" value="2.50 A"/>
    <property type="chains" value="A/B/C/D=1-336"/>
</dbReference>
<dbReference type="PDBsum" id="2WM1"/>
<dbReference type="PDBsum" id="4IGM"/>
<dbReference type="PDBsum" id="4IGN"/>
<dbReference type="PDBsum" id="4IH3"/>
<dbReference type="PDBsum" id="4OFC"/>
<dbReference type="PDBsum" id="7PWY"/>
<dbReference type="SMR" id="Q8TDX5"/>
<dbReference type="BioGRID" id="126217">
    <property type="interactions" value="8"/>
</dbReference>
<dbReference type="FunCoup" id="Q8TDX5">
    <property type="interactions" value="89"/>
</dbReference>
<dbReference type="IntAct" id="Q8TDX5">
    <property type="interactions" value="6"/>
</dbReference>
<dbReference type="STRING" id="9606.ENSP00000348459"/>
<dbReference type="BindingDB" id="Q8TDX5"/>
<dbReference type="ChEMBL" id="CHEMBL4105941"/>
<dbReference type="DrugCentral" id="Q8TDX5"/>
<dbReference type="iPTMnet" id="Q8TDX5"/>
<dbReference type="PhosphoSitePlus" id="Q8TDX5"/>
<dbReference type="BioMuta" id="ACMSD"/>
<dbReference type="MassIVE" id="Q8TDX5"/>
<dbReference type="PaxDb" id="9606-ENSP00000348459"/>
<dbReference type="PeptideAtlas" id="Q8TDX5"/>
<dbReference type="ProteomicsDB" id="74359">
    <molecule id="Q8TDX5-1"/>
</dbReference>
<dbReference type="ProteomicsDB" id="74360">
    <molecule id="Q8TDX5-2"/>
</dbReference>
<dbReference type="Antibodypedia" id="2546">
    <property type="antibodies" value="115 antibodies from 21 providers"/>
</dbReference>
<dbReference type="DNASU" id="130013"/>
<dbReference type="Ensembl" id="ENST00000356140.10">
    <molecule id="Q8TDX5-1"/>
    <property type="protein sequence ID" value="ENSP00000348459.5"/>
    <property type="gene ID" value="ENSG00000153086.14"/>
</dbReference>
<dbReference type="Ensembl" id="ENST00000392928.5">
    <molecule id="Q8TDX5-2"/>
    <property type="protein sequence ID" value="ENSP00000376659.1"/>
    <property type="gene ID" value="ENSG00000153086.14"/>
</dbReference>
<dbReference type="GeneID" id="130013"/>
<dbReference type="KEGG" id="hsa:130013"/>
<dbReference type="MANE-Select" id="ENST00000356140.10">
    <property type="protein sequence ID" value="ENSP00000348459.5"/>
    <property type="RefSeq nucleotide sequence ID" value="NM_138326.3"/>
    <property type="RefSeq protein sequence ID" value="NP_612199.2"/>
</dbReference>
<dbReference type="UCSC" id="uc002ttz.4">
    <molecule id="Q8TDX5-1"/>
    <property type="organism name" value="human"/>
</dbReference>
<dbReference type="AGR" id="HGNC:19288"/>
<dbReference type="CTD" id="130013"/>
<dbReference type="DisGeNET" id="130013"/>
<dbReference type="GeneCards" id="ACMSD"/>
<dbReference type="HGNC" id="HGNC:19288">
    <property type="gene designation" value="ACMSD"/>
</dbReference>
<dbReference type="HPA" id="ENSG00000153086">
    <property type="expression patterns" value="Group enriched (kidney, liver)"/>
</dbReference>
<dbReference type="MalaCards" id="ACMSD"/>
<dbReference type="MIM" id="608889">
    <property type="type" value="gene"/>
</dbReference>
<dbReference type="neXtProt" id="NX_Q8TDX5"/>
<dbReference type="OpenTargets" id="ENSG00000153086"/>
<dbReference type="PharmGKB" id="PA134973312"/>
<dbReference type="VEuPathDB" id="HostDB:ENSG00000153086"/>
<dbReference type="eggNOG" id="KOG4245">
    <property type="taxonomic scope" value="Eukaryota"/>
</dbReference>
<dbReference type="GeneTree" id="ENSGT00490000043417"/>
<dbReference type="HOGENOM" id="CLU_039329_1_2_1"/>
<dbReference type="InParanoid" id="Q8TDX5"/>
<dbReference type="OMA" id="RIESCIM"/>
<dbReference type="OrthoDB" id="191270at2759"/>
<dbReference type="PAN-GO" id="Q8TDX5">
    <property type="GO annotations" value="4 GO annotations based on evolutionary models"/>
</dbReference>
<dbReference type="PhylomeDB" id="Q8TDX5"/>
<dbReference type="TreeFam" id="TF313232"/>
<dbReference type="BioCyc" id="MetaCyc:HS14455-MONOMER"/>
<dbReference type="BRENDA" id="4.1.1.45">
    <property type="organism ID" value="2681"/>
</dbReference>
<dbReference type="PathwayCommons" id="Q8TDX5"/>
<dbReference type="Reactome" id="R-HSA-71240">
    <property type="pathway name" value="Tryptophan catabolism"/>
</dbReference>
<dbReference type="SignaLink" id="Q8TDX5"/>
<dbReference type="UniPathway" id="UPA00270"/>
<dbReference type="BioGRID-ORCS" id="130013">
    <property type="hits" value="4 hits in 1139 CRISPR screens"/>
</dbReference>
<dbReference type="EvolutionaryTrace" id="Q8TDX5"/>
<dbReference type="GenomeRNAi" id="130013"/>
<dbReference type="Pharos" id="Q8TDX5">
    <property type="development level" value="Tchem"/>
</dbReference>
<dbReference type="PRO" id="PR:Q8TDX5"/>
<dbReference type="Proteomes" id="UP000005640">
    <property type="component" value="Chromosome 2"/>
</dbReference>
<dbReference type="RNAct" id="Q8TDX5">
    <property type="molecule type" value="protein"/>
</dbReference>
<dbReference type="Bgee" id="ENSG00000153086">
    <property type="expression patterns" value="Expressed in kidney epithelium and 109 other cell types or tissues"/>
</dbReference>
<dbReference type="ExpressionAtlas" id="Q8TDX5">
    <property type="expression patterns" value="baseline and differential"/>
</dbReference>
<dbReference type="GO" id="GO:0005737">
    <property type="term" value="C:cytoplasm"/>
    <property type="evidence" value="ECO:0000318"/>
    <property type="project" value="GO_Central"/>
</dbReference>
<dbReference type="GO" id="GO:0005829">
    <property type="term" value="C:cytosol"/>
    <property type="evidence" value="ECO:0000314"/>
    <property type="project" value="UniProtKB"/>
</dbReference>
<dbReference type="GO" id="GO:0001760">
    <property type="term" value="F:aminocarboxymuconate-semialdehyde decarboxylase activity"/>
    <property type="evidence" value="ECO:0000314"/>
    <property type="project" value="ParkinsonsUK-UCL"/>
</dbReference>
<dbReference type="GO" id="GO:0016787">
    <property type="term" value="F:hydrolase activity"/>
    <property type="evidence" value="ECO:0007669"/>
    <property type="project" value="InterPro"/>
</dbReference>
<dbReference type="GO" id="GO:0008270">
    <property type="term" value="F:zinc ion binding"/>
    <property type="evidence" value="ECO:0000314"/>
    <property type="project" value="ParkinsonsUK-UCL"/>
</dbReference>
<dbReference type="GO" id="GO:0006569">
    <property type="term" value="P:L-tryptophan catabolic process"/>
    <property type="evidence" value="ECO:0000304"/>
    <property type="project" value="ParkinsonsUK-UCL"/>
</dbReference>
<dbReference type="GO" id="GO:1904985">
    <property type="term" value="P:negative regulation of quinolinate biosynthetic process"/>
    <property type="evidence" value="ECO:0000314"/>
    <property type="project" value="UniProtKB"/>
</dbReference>
<dbReference type="GO" id="GO:1905004">
    <property type="term" value="P:picolinic acid biosynthetic process"/>
    <property type="evidence" value="ECO:0000304"/>
    <property type="project" value="ParkinsonsUK-UCL"/>
</dbReference>
<dbReference type="GO" id="GO:1905012">
    <property type="term" value="P:regulation of 'de novo' NAD biosynthetic process from L-tryptophan"/>
    <property type="evidence" value="ECO:0000304"/>
    <property type="project" value="ParkinsonsUK-UCL"/>
</dbReference>
<dbReference type="GO" id="GO:0019748">
    <property type="term" value="P:secondary metabolic process"/>
    <property type="evidence" value="ECO:0000318"/>
    <property type="project" value="GO_Central"/>
</dbReference>
<dbReference type="FunFam" id="3.20.20.140:FF:000029">
    <property type="entry name" value="2-amino-3-carboxymuconate-6-semialdehyde decarboxylase"/>
    <property type="match status" value="1"/>
</dbReference>
<dbReference type="Gene3D" id="3.20.20.140">
    <property type="entry name" value="Metal-dependent hydrolases"/>
    <property type="match status" value="1"/>
</dbReference>
<dbReference type="InterPro" id="IPR032465">
    <property type="entry name" value="ACMSD"/>
</dbReference>
<dbReference type="InterPro" id="IPR006680">
    <property type="entry name" value="Amidohydro-rel"/>
</dbReference>
<dbReference type="InterPro" id="IPR032466">
    <property type="entry name" value="Metal_Hydrolase"/>
</dbReference>
<dbReference type="PANTHER" id="PTHR21240">
    <property type="entry name" value="2-AMINO-3-CARBOXYLMUCONATE-6-SEMIALDEHYDE DECARBOXYLASE"/>
    <property type="match status" value="1"/>
</dbReference>
<dbReference type="PANTHER" id="PTHR21240:SF27">
    <property type="entry name" value="2-AMINO-3-CARBOXYMUCONATE-6-SEMIALDEHYDE DECARBOXYLASE"/>
    <property type="match status" value="1"/>
</dbReference>
<dbReference type="Pfam" id="PF04909">
    <property type="entry name" value="Amidohydro_2"/>
    <property type="match status" value="1"/>
</dbReference>
<dbReference type="SUPFAM" id="SSF51556">
    <property type="entry name" value="Metallo-dependent hydrolases"/>
    <property type="match status" value="1"/>
</dbReference>
<proteinExistence type="evidence at protein level"/>
<name>ACMSD_HUMAN</name>
<accession>Q8TDX5</accession>
<accession>Q3B7X3</accession>
<accession>Q53SR5</accession>
<accession>Q96KY2</accession>
<sequence>MKIDIHSHILPKEWPDLKKRFGYGGWVQLQHHSKGEAKLLKDGKVFRVVRENCWDPEVRIREMDQKGVTVQALSTVPVMFSYWAKPEDTLNLCQLLNNDLASTVVSYPRRFVGLGTLPMQAPELAVKEMERCVKELGFPGVQIGTHVNEWDLNAQELFPVYAAAERLKCSLFVHPWDMQMDGRMAKYWLPWLVGMPAETTIAICSMIMGGVFEKFPKLKVCFAHGGGAFPFTVGRISHGFSMRPDLCAQDNPMNPKKYLGSFYTDALVHDPLSLKLLTDVIGKDKVILGTDYPFPLGELEPGKLIESMEEFDEETKNKLKAGNALAFLGLERKQFE</sequence>
<feature type="chain" id="PRO_0000190979" description="2-amino-3-carboxymuconate-6-semialdehyde decarboxylase">
    <location>
        <begin position="1"/>
        <end position="336"/>
    </location>
</feature>
<feature type="binding site" evidence="2">
    <location>
        <position position="6"/>
    </location>
    <ligand>
        <name>Zn(2+)</name>
        <dbReference type="ChEBI" id="CHEBI:29105"/>
    </ligand>
</feature>
<feature type="binding site" evidence="2">
    <location>
        <position position="8"/>
    </location>
    <ligand>
        <name>Zn(2+)</name>
        <dbReference type="ChEBI" id="CHEBI:29105"/>
    </ligand>
</feature>
<feature type="binding site" evidence="7">
    <location>
        <position position="47"/>
    </location>
    <ligand>
        <name>substrate</name>
    </ligand>
</feature>
<feature type="binding site" evidence="2">
    <location>
        <position position="174"/>
    </location>
    <ligand>
        <name>Zn(2+)</name>
        <dbReference type="ChEBI" id="CHEBI:29105"/>
    </ligand>
</feature>
<feature type="binding site" evidence="2">
    <location>
        <position position="291"/>
    </location>
    <ligand>
        <name>Zn(2+)</name>
        <dbReference type="ChEBI" id="CHEBI:29105"/>
    </ligand>
</feature>
<feature type="splice variant" id="VSP_050622" description="In isoform 2." evidence="4">
    <location>
        <begin position="1"/>
        <end position="58"/>
    </location>
</feature>
<feature type="splice variant" id="VSP_050623" description="In isoform 2." evidence="4">
    <original>RIREMDQKGVTVQALSTVPVMFSYW</original>
    <variation>MGKSSEWCERIAGIQKFVLEKWTKK</variation>
    <location>
        <begin position="59"/>
        <end position="83"/>
    </location>
</feature>
<feature type="strand" evidence="10">
    <location>
        <begin position="3"/>
        <end position="8"/>
    </location>
</feature>
<feature type="helix" evidence="10">
    <location>
        <begin position="17"/>
        <end position="21"/>
    </location>
</feature>
<feature type="strand" evidence="10">
    <location>
        <begin position="27"/>
        <end position="33"/>
    </location>
</feature>
<feature type="strand" evidence="10">
    <location>
        <begin position="36"/>
        <end position="41"/>
    </location>
</feature>
<feature type="strand" evidence="10">
    <location>
        <begin position="44"/>
        <end position="50"/>
    </location>
</feature>
<feature type="helix" evidence="10">
    <location>
        <begin position="51"/>
        <end position="53"/>
    </location>
</feature>
<feature type="helix" evidence="10">
    <location>
        <begin position="56"/>
        <end position="66"/>
    </location>
</feature>
<feature type="strand" evidence="10">
    <location>
        <begin position="70"/>
        <end position="74"/>
    </location>
</feature>
<feature type="helix" evidence="10">
    <location>
        <begin position="77"/>
        <end position="80"/>
    </location>
</feature>
<feature type="helix" evidence="10">
    <location>
        <begin position="86"/>
        <end position="106"/>
    </location>
</feature>
<feature type="turn" evidence="10">
    <location>
        <begin position="108"/>
        <end position="110"/>
    </location>
</feature>
<feature type="strand" evidence="10">
    <location>
        <begin position="111"/>
        <end position="115"/>
    </location>
</feature>
<feature type="helix" evidence="10">
    <location>
        <begin position="122"/>
        <end position="134"/>
    </location>
</feature>
<feature type="strand" evidence="10">
    <location>
        <begin position="139"/>
        <end position="147"/>
    </location>
</feature>
<feature type="helix" evidence="10">
    <location>
        <begin position="155"/>
        <end position="157"/>
    </location>
</feature>
<feature type="helix" evidence="10">
    <location>
        <begin position="158"/>
        <end position="167"/>
    </location>
</feature>
<feature type="strand" evidence="10">
    <location>
        <begin position="170"/>
        <end position="174"/>
    </location>
</feature>
<feature type="helix" evidence="10">
    <location>
        <begin position="182"/>
        <end position="185"/>
    </location>
</feature>
<feature type="helix" evidence="10">
    <location>
        <begin position="189"/>
        <end position="192"/>
    </location>
</feature>
<feature type="helix" evidence="10">
    <location>
        <begin position="194"/>
        <end position="207"/>
    </location>
</feature>
<feature type="turn" evidence="10">
    <location>
        <begin position="208"/>
        <end position="210"/>
    </location>
</feature>
<feature type="helix" evidence="10">
    <location>
        <begin position="211"/>
        <end position="214"/>
    </location>
</feature>
<feature type="strand" evidence="10">
    <location>
        <begin position="220"/>
        <end position="223"/>
    </location>
</feature>
<feature type="helix" evidence="10">
    <location>
        <begin position="224"/>
        <end position="226"/>
    </location>
</feature>
<feature type="helix" evidence="10">
    <location>
        <begin position="229"/>
        <end position="242"/>
    </location>
</feature>
<feature type="helix" evidence="10">
    <location>
        <begin position="244"/>
        <end position="247"/>
    </location>
</feature>
<feature type="strand" evidence="10">
    <location>
        <begin position="248"/>
        <end position="250"/>
    </location>
</feature>
<feature type="helix" evidence="10">
    <location>
        <begin position="255"/>
        <end position="258"/>
    </location>
</feature>
<feature type="strand" evidence="10">
    <location>
        <begin position="261"/>
        <end position="265"/>
    </location>
</feature>
<feature type="helix" evidence="10">
    <location>
        <begin position="271"/>
        <end position="281"/>
    </location>
</feature>
<feature type="strand" evidence="10">
    <location>
        <begin position="285"/>
        <end position="287"/>
    </location>
</feature>
<feature type="helix" evidence="10">
    <location>
        <begin position="303"/>
        <end position="307"/>
    </location>
</feature>
<feature type="helix" evidence="10">
    <location>
        <begin position="313"/>
        <end position="320"/>
    </location>
</feature>
<feature type="helix" evidence="10">
    <location>
        <begin position="322"/>
        <end position="328"/>
    </location>
</feature>
<feature type="helix" evidence="10">
    <location>
        <begin position="332"/>
        <end position="334"/>
    </location>
</feature>
<keyword id="KW-0002">3D-structure</keyword>
<keyword id="KW-0025">Alternative splicing</keyword>
<keyword id="KW-0210">Decarboxylase</keyword>
<keyword id="KW-0456">Lyase</keyword>
<keyword id="KW-0479">Metal-binding</keyword>
<keyword id="KW-1267">Proteomics identification</keyword>
<keyword id="KW-1185">Reference proteome</keyword>
<keyword id="KW-0862">Zinc</keyword>
<protein>
    <recommendedName>
        <fullName evidence="3">2-amino-3-carboxymuconate-6-semialdehyde decarboxylase</fullName>
        <ecNumber evidence="1">4.1.1.45</ecNumber>
    </recommendedName>
    <alternativeName>
        <fullName evidence="3">Picolinate carboxylase</fullName>
    </alternativeName>
</protein>
<reference evidence="5" key="1">
    <citation type="journal article" date="2002" name="J. Biol. Chem.">
        <title>Identification and expression of a cDNA encoding human alpha-amino-beta-carboxymuconate-epsilon-semialdehyde decarboxylase (ACMSD). A key enzyme for the tryptophan-niacine pathway and 'quinolinate hypothesis'.</title>
        <authorList>
            <person name="Fukuoka S."/>
            <person name="Ishiguro K."/>
            <person name="Yanagihara K."/>
            <person name="Tanabe A."/>
            <person name="Egashira Y."/>
            <person name="Sanada H."/>
            <person name="Shibata K."/>
        </authorList>
    </citation>
    <scope>NUCLEOTIDE SEQUENCE [MRNA] (ISOFORM 1)</scope>
    <scope>CATALYTIC ACTIVITY</scope>
    <source>
        <tissue evidence="1">Brain</tissue>
    </source>
</reference>
<reference key="2">
    <citation type="journal article" date="2005" name="Nature">
        <title>Generation and annotation of the DNA sequences of human chromosomes 2 and 4.</title>
        <authorList>
            <person name="Hillier L.W."/>
            <person name="Graves T.A."/>
            <person name="Fulton R.S."/>
            <person name="Fulton L.A."/>
            <person name="Pepin K.H."/>
            <person name="Minx P."/>
            <person name="Wagner-McPherson C."/>
            <person name="Layman D."/>
            <person name="Wylie K."/>
            <person name="Sekhon M."/>
            <person name="Becker M.C."/>
            <person name="Fewell G.A."/>
            <person name="Delehaunty K.D."/>
            <person name="Miner T.L."/>
            <person name="Nash W.E."/>
            <person name="Kremitzki C."/>
            <person name="Oddy L."/>
            <person name="Du H."/>
            <person name="Sun H."/>
            <person name="Bradshaw-Cordum H."/>
            <person name="Ali J."/>
            <person name="Carter J."/>
            <person name="Cordes M."/>
            <person name="Harris A."/>
            <person name="Isak A."/>
            <person name="van Brunt A."/>
            <person name="Nguyen C."/>
            <person name="Du F."/>
            <person name="Courtney L."/>
            <person name="Kalicki J."/>
            <person name="Ozersky P."/>
            <person name="Abbott S."/>
            <person name="Armstrong J."/>
            <person name="Belter E.A."/>
            <person name="Caruso L."/>
            <person name="Cedroni M."/>
            <person name="Cotton M."/>
            <person name="Davidson T."/>
            <person name="Desai A."/>
            <person name="Elliott G."/>
            <person name="Erb T."/>
            <person name="Fronick C."/>
            <person name="Gaige T."/>
            <person name="Haakenson W."/>
            <person name="Haglund K."/>
            <person name="Holmes A."/>
            <person name="Harkins R."/>
            <person name="Kim K."/>
            <person name="Kruchowski S.S."/>
            <person name="Strong C.M."/>
            <person name="Grewal N."/>
            <person name="Goyea E."/>
            <person name="Hou S."/>
            <person name="Levy A."/>
            <person name="Martinka S."/>
            <person name="Mead K."/>
            <person name="McLellan M.D."/>
            <person name="Meyer R."/>
            <person name="Randall-Maher J."/>
            <person name="Tomlinson C."/>
            <person name="Dauphin-Kohlberg S."/>
            <person name="Kozlowicz-Reilly A."/>
            <person name="Shah N."/>
            <person name="Swearengen-Shahid S."/>
            <person name="Snider J."/>
            <person name="Strong J.T."/>
            <person name="Thompson J."/>
            <person name="Yoakum M."/>
            <person name="Leonard S."/>
            <person name="Pearman C."/>
            <person name="Trani L."/>
            <person name="Radionenko M."/>
            <person name="Waligorski J.E."/>
            <person name="Wang C."/>
            <person name="Rock S.M."/>
            <person name="Tin-Wollam A.-M."/>
            <person name="Maupin R."/>
            <person name="Latreille P."/>
            <person name="Wendl M.C."/>
            <person name="Yang S.-P."/>
            <person name="Pohl C."/>
            <person name="Wallis J.W."/>
            <person name="Spieth J."/>
            <person name="Bieri T.A."/>
            <person name="Berkowicz N."/>
            <person name="Nelson J.O."/>
            <person name="Osborne J."/>
            <person name="Ding L."/>
            <person name="Meyer R."/>
            <person name="Sabo A."/>
            <person name="Shotland Y."/>
            <person name="Sinha P."/>
            <person name="Wohldmann P.E."/>
            <person name="Cook L.L."/>
            <person name="Hickenbotham M.T."/>
            <person name="Eldred J."/>
            <person name="Williams D."/>
            <person name="Jones T.A."/>
            <person name="She X."/>
            <person name="Ciccarelli F.D."/>
            <person name="Izaurralde E."/>
            <person name="Taylor J."/>
            <person name="Schmutz J."/>
            <person name="Myers R.M."/>
            <person name="Cox D.R."/>
            <person name="Huang X."/>
            <person name="McPherson J.D."/>
            <person name="Mardis E.R."/>
            <person name="Clifton S.W."/>
            <person name="Warren W.C."/>
            <person name="Chinwalla A.T."/>
            <person name="Eddy S.R."/>
            <person name="Marra M.A."/>
            <person name="Ovcharenko I."/>
            <person name="Furey T.S."/>
            <person name="Miller W."/>
            <person name="Eichler E.E."/>
            <person name="Bork P."/>
            <person name="Suyama M."/>
            <person name="Torrents D."/>
            <person name="Waterston R.H."/>
            <person name="Wilson R.K."/>
        </authorList>
    </citation>
    <scope>NUCLEOTIDE SEQUENCE [LARGE SCALE GENOMIC DNA]</scope>
</reference>
<reference key="3">
    <citation type="submission" date="2005-09" db="EMBL/GenBank/DDBJ databases">
        <authorList>
            <person name="Mural R.J."/>
            <person name="Istrail S."/>
            <person name="Sutton G."/>
            <person name="Florea L."/>
            <person name="Halpern A.L."/>
            <person name="Mobarry C.M."/>
            <person name="Lippert R."/>
            <person name="Walenz B."/>
            <person name="Shatkay H."/>
            <person name="Dew I."/>
            <person name="Miller J.R."/>
            <person name="Flanigan M.J."/>
            <person name="Edwards N.J."/>
            <person name="Bolanos R."/>
            <person name="Fasulo D."/>
            <person name="Halldorsson B.V."/>
            <person name="Hannenhalli S."/>
            <person name="Turner R."/>
            <person name="Yooseph S."/>
            <person name="Lu F."/>
            <person name="Nusskern D.R."/>
            <person name="Shue B.C."/>
            <person name="Zheng X.H."/>
            <person name="Zhong F."/>
            <person name="Delcher A.L."/>
            <person name="Huson D.H."/>
            <person name="Kravitz S.A."/>
            <person name="Mouchard L."/>
            <person name="Reinert K."/>
            <person name="Remington K.A."/>
            <person name="Clark A.G."/>
            <person name="Waterman M.S."/>
            <person name="Eichler E.E."/>
            <person name="Adams M.D."/>
            <person name="Hunkapiller M.W."/>
            <person name="Myers E.W."/>
            <person name="Venter J.C."/>
        </authorList>
    </citation>
    <scope>NUCLEOTIDE SEQUENCE [LARGE SCALE GENOMIC DNA]</scope>
</reference>
<reference evidence="5" key="4">
    <citation type="journal article" date="2004" name="Genome Res.">
        <title>The status, quality, and expansion of the NIH full-length cDNA project: the Mammalian Gene Collection (MGC).</title>
        <authorList>
            <consortium name="The MGC Project Team"/>
        </authorList>
    </citation>
    <scope>NUCLEOTIDE SEQUENCE [LARGE SCALE MRNA] (ISOFORMS 1 AND 2)</scope>
    <source>
        <tissue>Kidney</tissue>
        <tissue evidence="8">Liver</tissue>
    </source>
</reference>
<reference key="5">
    <citation type="journal article" date="2009" name="FEBS J.">
        <title>The crystal structure of human alpha-amino-beta-carboxymuconate-epsilon-semialdehyde decarboxylase in complex with 1,3-dihydroxyacetonephosphate suggests a regulatory link between NAD synthesis and glycolysis.</title>
        <authorList>
            <person name="Garavaglia S."/>
            <person name="Perozzi S."/>
            <person name="Galeazzi L."/>
            <person name="Raffaelli N."/>
            <person name="Rizzi M."/>
        </authorList>
    </citation>
    <scope>X-RAY CRYSTALLOGRAPHY (2.01 ANGSTROMS) IN COMPLEX WITH ZINC IONS AND DHAP</scope>
    <scope>FUNCTION</scope>
    <scope>SUBUNIT</scope>
    <scope>ZINC-BINDING SITES</scope>
</reference>
<comment type="function">
    <text evidence="2">Converts alpha-amino-beta-carboxymuconate-epsilon-semialdehyde (ACMS) to alpha-aminomuconate semialdehyde (AMS). ACMS can be converted non-enzymatically to quinolate (QA), a key precursor of NAD, and a potent endogenous excitotoxin of neuronal cells which is implicated in the pathogenesis of various neurodegenerative disorders. In the presence of ACMSD, ACMS is converted to AMS, a benign catabolite. ACMSD ultimately controls the metabolic fate of tryptophan catabolism along the kynurenine pathway.</text>
</comment>
<comment type="catalytic activity">
    <reaction evidence="1">
        <text>2-amino-3-carboxymuconate 6-semialdehyde + H(+) = 2-aminomuconate 6-semialdehyde + CO2</text>
        <dbReference type="Rhea" id="RHEA:16557"/>
        <dbReference type="ChEBI" id="CHEBI:15378"/>
        <dbReference type="ChEBI" id="CHEBI:16526"/>
        <dbReference type="ChEBI" id="CHEBI:77634"/>
        <dbReference type="ChEBI" id="CHEBI:77803"/>
        <dbReference type="EC" id="4.1.1.45"/>
    </reaction>
</comment>
<comment type="pathway">
    <text evidence="6">Secondary metabolite metabolism; quinolate metabolism.</text>
</comment>
<comment type="subunit">
    <text evidence="2">Monomer.</text>
</comment>
<comment type="interaction">
    <interactant intactId="EBI-749859">
        <id>Q8TDX5</id>
    </interactant>
    <interactant intactId="EBI-10178634">
        <id>P43364-2</id>
        <label>MAGEA11</label>
    </interactant>
    <organismsDiffer>false</organismsDiffer>
    <experiments>3</experiments>
</comment>
<comment type="interaction">
    <interactant intactId="EBI-12809094">
        <id>Q8TDX5-2</id>
    </interactant>
    <interactant intactId="EBI-347538">
        <id>Q9Y4H4</id>
        <label>GPSM3</label>
    </interactant>
    <organismsDiffer>false</organismsDiffer>
    <experiments>3</experiments>
</comment>
<comment type="interaction">
    <interactant intactId="EBI-12809094">
        <id>Q8TDX5-2</id>
    </interactant>
    <interactant intactId="EBI-739895">
        <id>Q8N6Y0</id>
        <label>USHBP1</label>
    </interactant>
    <organismsDiffer>false</organismsDiffer>
    <experiments>3</experiments>
</comment>
<comment type="alternative products">
    <event type="alternative splicing"/>
    <isoform>
        <id>Q8TDX5-1</id>
        <name evidence="1">1</name>
        <sequence type="displayed"/>
    </isoform>
    <isoform>
        <id>Q8TDX5-2</id>
        <name evidence="5">2</name>
        <sequence type="described" ref="VSP_050622 VSP_050623"/>
    </isoform>
</comment>
<comment type="similarity">
    <text evidence="5">Belongs to the metallo-dependent hydrolases superfamily. ACMSD family.</text>
</comment>
<organism evidence="9">
    <name type="scientific">Homo sapiens</name>
    <name type="common">Human</name>
    <dbReference type="NCBI Taxonomy" id="9606"/>
    <lineage>
        <taxon>Eukaryota</taxon>
        <taxon>Metazoa</taxon>
        <taxon>Chordata</taxon>
        <taxon>Craniata</taxon>
        <taxon>Vertebrata</taxon>
        <taxon>Euteleostomi</taxon>
        <taxon>Mammalia</taxon>
        <taxon>Eutheria</taxon>
        <taxon>Euarchontoglires</taxon>
        <taxon>Primates</taxon>
        <taxon>Haplorrhini</taxon>
        <taxon>Catarrhini</taxon>
        <taxon>Hominidae</taxon>
        <taxon>Homo</taxon>
    </lineage>
</organism>